<gene>
    <name type="primary">nlpI</name>
    <name type="ordered locus">ECOK1_3584</name>
</gene>
<proteinExistence type="inferred from homology"/>
<accession>D5D1H3</accession>
<sequence length="294" mass="33621">MKPFLRWCFVATALTLAGCSNTSWRKSEVLAVPLQPTLQQEVILARMEQILASRALTDDERAQLLYERGVLYDSLGLRALARNDFSQALAIRPDMPEVFNYLGIYLTQAGNFDAAYEAFDSVLELDPTYNYAHLNRGIALYYGGRDKLAQDDLLAFYQDDPNDPFRSLWLYLAEQKLDEKQAKEVLKQHFEKSDKEQWGWNIVEFYLGNISEQTLMERLKADATDNTSLAEHLSETNFYLGKYYLSLGDLDSATALFKLAVANNVHNFVEHRYALLELSLLGQDQDDLAESDQQ</sequence>
<name>NLPI_ECOKI</name>
<reference key="1">
    <citation type="journal article" date="2010" name="Proc. Natl. Acad. Sci. U.S.A.">
        <title>Identification of protective and broadly conserved vaccine antigens from the genome of extraintestinal pathogenic Escherichia coli.</title>
        <authorList>
            <person name="Moriel D.G."/>
            <person name="Bertoldi I."/>
            <person name="Spagnuolo A."/>
            <person name="Marchi S."/>
            <person name="Rosini R."/>
            <person name="Nesta B."/>
            <person name="Pastorello I."/>
            <person name="Corea V.A."/>
            <person name="Torricelli G."/>
            <person name="Cartocci E."/>
            <person name="Savino S."/>
            <person name="Scarselli M."/>
            <person name="Dobrindt U."/>
            <person name="Hacker J."/>
            <person name="Tettelin H."/>
            <person name="Tallon L.J."/>
            <person name="Sullivan S."/>
            <person name="Wieler L.H."/>
            <person name="Ewers C."/>
            <person name="Pickard D."/>
            <person name="Dougan G."/>
            <person name="Fontana M.R."/>
            <person name="Rappuoli R."/>
            <person name="Pizza M."/>
            <person name="Serino L."/>
        </authorList>
    </citation>
    <scope>NUCLEOTIDE SEQUENCE [LARGE SCALE GENOMIC DNA]</scope>
    <source>
        <strain>IHE3034 / ExPEC</strain>
    </source>
</reference>
<reference key="2">
    <citation type="journal article" date="2010" name="Infect. Immun.">
        <title>NlpI contributes to Escherichia coli K1 strain RS218 interaction with human brain microvascular endothelial cells.</title>
        <authorList>
            <person name="Teng C.H."/>
            <person name="Tseng Y.T."/>
            <person name="Maruvada R."/>
            <person name="Pearce D."/>
            <person name="Xie Y."/>
            <person name="Paul-Satyaseela M."/>
            <person name="Kim K.S."/>
        </authorList>
    </citation>
    <scope>FUNCTION</scope>
    <scope>SUBCELLULAR LOCATION</scope>
    <scope>DISRUPTION PHENOTYPE</scope>
    <source>
        <strain>O18:K1:H7 / RS218</strain>
    </source>
</reference>
<evidence type="ECO:0000250" key="1"/>
<evidence type="ECO:0000255" key="2">
    <source>
        <dbReference type="PROSITE-ProRule" id="PRU00303"/>
    </source>
</evidence>
<evidence type="ECO:0000269" key="3">
    <source>
    </source>
</evidence>
<dbReference type="EMBL" id="CP001969">
    <property type="protein sequence ID" value="ADE91500.1"/>
    <property type="molecule type" value="Genomic_DNA"/>
</dbReference>
<dbReference type="RefSeq" id="WP_000802080.1">
    <property type="nucleotide sequence ID" value="NC_017628.1"/>
</dbReference>
<dbReference type="SMR" id="D5D1H3"/>
<dbReference type="GeneID" id="93778820"/>
<dbReference type="KEGG" id="eih:ECOK1_3584"/>
<dbReference type="PATRIC" id="fig|714962.3.peg.3621"/>
<dbReference type="HOGENOM" id="CLU_071600_0_0_6"/>
<dbReference type="GO" id="GO:0005886">
    <property type="term" value="C:plasma membrane"/>
    <property type="evidence" value="ECO:0007669"/>
    <property type="project" value="UniProtKB-SubCell"/>
</dbReference>
<dbReference type="GO" id="GO:0051301">
    <property type="term" value="P:cell division"/>
    <property type="evidence" value="ECO:0007669"/>
    <property type="project" value="UniProtKB-KW"/>
</dbReference>
<dbReference type="FunFam" id="1.25.40.10:FF:000021">
    <property type="entry name" value="Lipoprotein NlpI"/>
    <property type="match status" value="1"/>
</dbReference>
<dbReference type="Gene3D" id="1.25.40.10">
    <property type="entry name" value="Tetratricopeptide repeat domain"/>
    <property type="match status" value="1"/>
</dbReference>
<dbReference type="InterPro" id="IPR023605">
    <property type="entry name" value="Lipoprotein_NlpI"/>
</dbReference>
<dbReference type="InterPro" id="IPR011990">
    <property type="entry name" value="TPR-like_helical_dom_sf"/>
</dbReference>
<dbReference type="InterPro" id="IPR019734">
    <property type="entry name" value="TPR_rpt"/>
</dbReference>
<dbReference type="InterPro" id="IPR050498">
    <property type="entry name" value="Ycf3"/>
</dbReference>
<dbReference type="NCBIfam" id="NF008391">
    <property type="entry name" value="PRK11189.1"/>
    <property type="match status" value="1"/>
</dbReference>
<dbReference type="PANTHER" id="PTHR44858">
    <property type="entry name" value="TETRATRICOPEPTIDE REPEAT PROTEIN 6"/>
    <property type="match status" value="1"/>
</dbReference>
<dbReference type="PANTHER" id="PTHR44858:SF1">
    <property type="entry name" value="UDP-N-ACETYLGLUCOSAMINE--PEPTIDE N-ACETYLGLUCOSAMINYLTRANSFERASE SPINDLY-RELATED"/>
    <property type="match status" value="1"/>
</dbReference>
<dbReference type="Pfam" id="PF13432">
    <property type="entry name" value="TPR_16"/>
    <property type="match status" value="1"/>
</dbReference>
<dbReference type="PIRSF" id="PIRSF004654">
    <property type="entry name" value="NlpI"/>
    <property type="match status" value="1"/>
</dbReference>
<dbReference type="SMART" id="SM00028">
    <property type="entry name" value="TPR"/>
    <property type="match status" value="3"/>
</dbReference>
<dbReference type="SUPFAM" id="SSF48452">
    <property type="entry name" value="TPR-like"/>
    <property type="match status" value="1"/>
</dbReference>
<dbReference type="PROSITE" id="PS51257">
    <property type="entry name" value="PROKAR_LIPOPROTEIN"/>
    <property type="match status" value="1"/>
</dbReference>
<dbReference type="PROSITE" id="PS50005">
    <property type="entry name" value="TPR"/>
    <property type="match status" value="3"/>
</dbReference>
<dbReference type="PROSITE" id="PS50293">
    <property type="entry name" value="TPR_REGION"/>
    <property type="match status" value="2"/>
</dbReference>
<feature type="signal peptide" evidence="2">
    <location>
        <begin position="1"/>
        <end position="18"/>
    </location>
</feature>
<feature type="chain" id="PRO_0000413476" description="Lipoprotein NlpI">
    <location>
        <begin position="19"/>
        <end position="294"/>
    </location>
</feature>
<feature type="repeat" description="TPR 1">
    <location>
        <begin position="62"/>
        <end position="95"/>
    </location>
</feature>
<feature type="repeat" description="TPR 2">
    <location>
        <begin position="96"/>
        <end position="129"/>
    </location>
</feature>
<feature type="repeat" description="TPR 3">
    <location>
        <begin position="234"/>
        <end position="267"/>
    </location>
</feature>
<feature type="lipid moiety-binding region" description="N-palmitoyl cysteine" evidence="2">
    <location>
        <position position="19"/>
    </location>
</feature>
<feature type="lipid moiety-binding region" description="S-diacylglycerol cysteine" evidence="2">
    <location>
        <position position="19"/>
    </location>
</feature>
<organism>
    <name type="scientific">Escherichia coli O18:K1:H7 (strain IHE3034 / ExPEC)</name>
    <dbReference type="NCBI Taxonomy" id="714962"/>
    <lineage>
        <taxon>Bacteria</taxon>
        <taxon>Pseudomonadati</taxon>
        <taxon>Pseudomonadota</taxon>
        <taxon>Gammaproteobacteria</taxon>
        <taxon>Enterobacterales</taxon>
        <taxon>Enterobacteriaceae</taxon>
        <taxon>Escherichia</taxon>
    </lineage>
</organism>
<keyword id="KW-0131">Cell cycle</keyword>
<keyword id="KW-0132">Cell division</keyword>
<keyword id="KW-1003">Cell membrane</keyword>
<keyword id="KW-0449">Lipoprotein</keyword>
<keyword id="KW-0472">Membrane</keyword>
<keyword id="KW-0564">Palmitate</keyword>
<keyword id="KW-0677">Repeat</keyword>
<keyword id="KW-0732">Signal</keyword>
<keyword id="KW-0802">TPR repeat</keyword>
<protein>
    <recommendedName>
        <fullName>Lipoprotein NlpI</fullName>
    </recommendedName>
</protein>
<comment type="function">
    <text evidence="1 3">May be involved in cell division. May play a role in bacterial septation or regulation of cell wall degradation during cell division (By similarity). Maybe also be involved in pathogenicity by playing a role in binding to and invading human brain microvascular endothelial cells via cytosolic phospholipase A2 alpha activation.</text>
</comment>
<comment type="subunit">
    <text evidence="1">Homodimer.</text>
</comment>
<comment type="subcellular location">
    <subcellularLocation>
        <location evidence="2 3">Cell membrane</location>
        <topology evidence="2 3">Lipid-anchor</topology>
    </subcellularLocation>
</comment>
<comment type="disruption phenotype">
    <text evidence="3">Reduced binding to and invasion of HBMECs. Growth defect in low-salt medium at 42 degrees Celsius.</text>
</comment>